<sequence length="469" mass="51192">MKDVEDIHRPMLNSLQSTSAKMKKIVLSVNAGSSSVKISAYSALFGQAPIQLAEAQISGLTAPPPTLRYTRHGEKVINDEEVKDQKVSTQADAFDILVKALIDDNGVPEISSKEDIAYICHRIVHGGDFVRPKLISDETYHNLEKLNDLAPLHNSTSLVIVHRCMSDMPKTTFNIACFDSQFHHTIPEHIRTYPINQDIARNNHLRKYGFHGISYAFITRATAEFLGKKVEDVNIIALHLGSGASACAIKGGKSLDNSMGLTPLAGLPGATRSGSVDPSLVFHYASDVGKLSPASTKDLHISRAEEILNKQSGWKALTGTTNFGTITAALDPSSSDTTSHLSPEEVAKMRLAFDIFVERICAYIGSYYVSLQGQVDALVFAGGIGEKSDRLRAAVIEQVSCLGFGPVDKEANETRVKEELDDSHDVIEIAPPNSKKGGKDGREHRVLVCKTDEQFEMARACAEDGEFWR</sequence>
<protein>
    <recommendedName>
        <fullName evidence="1">Probable acetate kinase</fullName>
        <ecNumber evidence="1">2.7.2.1</ecNumber>
    </recommendedName>
    <alternativeName>
        <fullName evidence="1">Acetokinase</fullName>
    </alternativeName>
</protein>
<comment type="catalytic activity">
    <reaction evidence="1">
        <text>acetate + ATP = acetyl phosphate + ADP</text>
        <dbReference type="Rhea" id="RHEA:11352"/>
        <dbReference type="ChEBI" id="CHEBI:22191"/>
        <dbReference type="ChEBI" id="CHEBI:30089"/>
        <dbReference type="ChEBI" id="CHEBI:30616"/>
        <dbReference type="ChEBI" id="CHEBI:456216"/>
        <dbReference type="EC" id="2.7.2.1"/>
    </reaction>
</comment>
<comment type="cofactor">
    <cofactor evidence="1">
        <name>Mg(2+)</name>
        <dbReference type="ChEBI" id="CHEBI:18420"/>
    </cofactor>
</comment>
<comment type="pathway">
    <text evidence="1">Metabolic intermediate biosynthesis; acetyl-CoA biosynthesis; acetyl-CoA from acetate: step 1/2.</text>
</comment>
<comment type="similarity">
    <text evidence="1">Belongs to the acetokinase family.</text>
</comment>
<proteinExistence type="inferred from homology"/>
<dbReference type="EC" id="2.7.2.1" evidence="1"/>
<dbReference type="EMBL" id="BX842635">
    <property type="protein sequence ID" value="CAE76499.1"/>
    <property type="molecule type" value="Genomic_DNA"/>
</dbReference>
<dbReference type="EMBL" id="CM002236">
    <property type="protein sequence ID" value="EAA36249.3"/>
    <property type="molecule type" value="Genomic_DNA"/>
</dbReference>
<dbReference type="RefSeq" id="XP_965485.3">
    <property type="nucleotide sequence ID" value="XM_960392.3"/>
</dbReference>
<dbReference type="SMR" id="Q7SH17"/>
<dbReference type="STRING" id="367110.Q7SH17"/>
<dbReference type="PaxDb" id="5141-EFNCRP00000002023"/>
<dbReference type="EnsemblFungi" id="EAA36249">
    <property type="protein sequence ID" value="EAA36249"/>
    <property type="gene ID" value="NCU02712"/>
</dbReference>
<dbReference type="GeneID" id="3881635"/>
<dbReference type="KEGG" id="ncr:NCU02712"/>
<dbReference type="VEuPathDB" id="FungiDB:NCU02712"/>
<dbReference type="HOGENOM" id="CLU_020352_1_0_1"/>
<dbReference type="InParanoid" id="Q7SH17"/>
<dbReference type="OrthoDB" id="67445at2759"/>
<dbReference type="UniPathway" id="UPA00340">
    <property type="reaction ID" value="UER00458"/>
</dbReference>
<dbReference type="Proteomes" id="UP000001805">
    <property type="component" value="Chromosome 1, Linkage Group I"/>
</dbReference>
<dbReference type="GO" id="GO:0008776">
    <property type="term" value="F:acetate kinase activity"/>
    <property type="evidence" value="ECO:0000318"/>
    <property type="project" value="GO_Central"/>
</dbReference>
<dbReference type="GO" id="GO:0005524">
    <property type="term" value="F:ATP binding"/>
    <property type="evidence" value="ECO:0007669"/>
    <property type="project" value="UniProtKB-KW"/>
</dbReference>
<dbReference type="GO" id="GO:0000287">
    <property type="term" value="F:magnesium ion binding"/>
    <property type="evidence" value="ECO:0007669"/>
    <property type="project" value="UniProtKB-UniRule"/>
</dbReference>
<dbReference type="GO" id="GO:0006083">
    <property type="term" value="P:acetate metabolic process"/>
    <property type="evidence" value="ECO:0000318"/>
    <property type="project" value="GO_Central"/>
</dbReference>
<dbReference type="GO" id="GO:0006085">
    <property type="term" value="P:acetyl-CoA biosynthetic process"/>
    <property type="evidence" value="ECO:0007669"/>
    <property type="project" value="UniProtKB-UniRule"/>
</dbReference>
<dbReference type="Gene3D" id="3.30.420.40">
    <property type="match status" value="2"/>
</dbReference>
<dbReference type="HAMAP" id="MF_00020">
    <property type="entry name" value="Acetate_kinase"/>
    <property type="match status" value="1"/>
</dbReference>
<dbReference type="InterPro" id="IPR004372">
    <property type="entry name" value="Ac/propionate_kinase"/>
</dbReference>
<dbReference type="InterPro" id="IPR000890">
    <property type="entry name" value="Aliphatic_acid_kin_short-chain"/>
</dbReference>
<dbReference type="InterPro" id="IPR023865">
    <property type="entry name" value="Aliphatic_acid_kinase_CS"/>
</dbReference>
<dbReference type="InterPro" id="IPR043129">
    <property type="entry name" value="ATPase_NBD"/>
</dbReference>
<dbReference type="PANTHER" id="PTHR21060">
    <property type="entry name" value="ACETATE KINASE"/>
    <property type="match status" value="1"/>
</dbReference>
<dbReference type="PANTHER" id="PTHR21060:SF15">
    <property type="entry name" value="ACETATE KINASE-RELATED"/>
    <property type="match status" value="1"/>
</dbReference>
<dbReference type="Pfam" id="PF00871">
    <property type="entry name" value="Acetate_kinase"/>
    <property type="match status" value="1"/>
</dbReference>
<dbReference type="PRINTS" id="PR00471">
    <property type="entry name" value="ACETATEKNASE"/>
</dbReference>
<dbReference type="SUPFAM" id="SSF53067">
    <property type="entry name" value="Actin-like ATPase domain"/>
    <property type="match status" value="2"/>
</dbReference>
<dbReference type="PROSITE" id="PS01075">
    <property type="entry name" value="ACETATE_KINASE_1"/>
    <property type="match status" value="1"/>
</dbReference>
<dbReference type="PROSITE" id="PS01076">
    <property type="entry name" value="ACETATE_KINASE_2"/>
    <property type="match status" value="1"/>
</dbReference>
<keyword id="KW-0067">ATP-binding</keyword>
<keyword id="KW-0418">Kinase</keyword>
<keyword id="KW-0460">Magnesium</keyword>
<keyword id="KW-0479">Metal-binding</keyword>
<keyword id="KW-0547">Nucleotide-binding</keyword>
<keyword id="KW-1185">Reference proteome</keyword>
<keyword id="KW-0808">Transferase</keyword>
<accession>Q7SH17</accession>
<accession>Q6MV02</accession>
<name>ACKA_NEUCR</name>
<feature type="chain" id="PRO_0000402092" description="Probable acetate kinase">
    <location>
        <begin position="1"/>
        <end position="469"/>
    </location>
</feature>
<feature type="active site" description="Proton donor/acceptor" evidence="1">
    <location>
        <position position="179"/>
    </location>
</feature>
<feature type="binding site" evidence="1">
    <location>
        <position position="30"/>
    </location>
    <ligand>
        <name>Mg(2+)</name>
        <dbReference type="ChEBI" id="CHEBI:18420"/>
    </ligand>
</feature>
<feature type="binding site" evidence="1">
    <location>
        <position position="37"/>
    </location>
    <ligand>
        <name>ATP</name>
        <dbReference type="ChEBI" id="CHEBI:30616"/>
    </ligand>
</feature>
<feature type="binding site" evidence="1">
    <location>
        <position position="122"/>
    </location>
    <ligand>
        <name>substrate</name>
    </ligand>
</feature>
<feature type="binding site" evidence="1">
    <location>
        <begin position="239"/>
        <end position="243"/>
    </location>
    <ligand>
        <name>ATP</name>
        <dbReference type="ChEBI" id="CHEBI:30616"/>
    </ligand>
</feature>
<feature type="binding site" evidence="1">
    <location>
        <position position="453"/>
    </location>
    <ligand>
        <name>Mg(2+)</name>
        <dbReference type="ChEBI" id="CHEBI:18420"/>
    </ligand>
</feature>
<feature type="site" description="Transition state stabilizer" evidence="1">
    <location>
        <position position="211"/>
    </location>
</feature>
<feature type="site" description="Transition state stabilizer" evidence="1">
    <location>
        <position position="272"/>
    </location>
</feature>
<evidence type="ECO:0000255" key="1">
    <source>
        <dbReference type="HAMAP-Rule" id="MF_03131"/>
    </source>
</evidence>
<organism>
    <name type="scientific">Neurospora crassa (strain ATCC 24698 / 74-OR23-1A / CBS 708.71 / DSM 1257 / FGSC 987)</name>
    <dbReference type="NCBI Taxonomy" id="367110"/>
    <lineage>
        <taxon>Eukaryota</taxon>
        <taxon>Fungi</taxon>
        <taxon>Dikarya</taxon>
        <taxon>Ascomycota</taxon>
        <taxon>Pezizomycotina</taxon>
        <taxon>Sordariomycetes</taxon>
        <taxon>Sordariomycetidae</taxon>
        <taxon>Sordariales</taxon>
        <taxon>Sordariaceae</taxon>
        <taxon>Neurospora</taxon>
    </lineage>
</organism>
<reference key="1">
    <citation type="journal article" date="2003" name="Nucleic Acids Res.">
        <title>What's in the genome of a filamentous fungus? Analysis of the Neurospora genome sequence.</title>
        <authorList>
            <person name="Mannhaupt G."/>
            <person name="Montrone C."/>
            <person name="Haase D."/>
            <person name="Mewes H.-W."/>
            <person name="Aign V."/>
            <person name="Hoheisel J.D."/>
            <person name="Fartmann B."/>
            <person name="Nyakatura G."/>
            <person name="Kempken F."/>
            <person name="Maier J."/>
            <person name="Schulte U."/>
        </authorList>
    </citation>
    <scope>NUCLEOTIDE SEQUENCE [LARGE SCALE GENOMIC DNA]</scope>
    <source>
        <strain>ATCC 24698 / 74-OR23-1A / CBS 708.71 / DSM 1257 / FGSC 987</strain>
    </source>
</reference>
<reference key="2">
    <citation type="journal article" date="2003" name="Nature">
        <title>The genome sequence of the filamentous fungus Neurospora crassa.</title>
        <authorList>
            <person name="Galagan J.E."/>
            <person name="Calvo S.E."/>
            <person name="Borkovich K.A."/>
            <person name="Selker E.U."/>
            <person name="Read N.D."/>
            <person name="Jaffe D.B."/>
            <person name="FitzHugh W."/>
            <person name="Ma L.-J."/>
            <person name="Smirnov S."/>
            <person name="Purcell S."/>
            <person name="Rehman B."/>
            <person name="Elkins T."/>
            <person name="Engels R."/>
            <person name="Wang S."/>
            <person name="Nielsen C.B."/>
            <person name="Butler J."/>
            <person name="Endrizzi M."/>
            <person name="Qui D."/>
            <person name="Ianakiev P."/>
            <person name="Bell-Pedersen D."/>
            <person name="Nelson M.A."/>
            <person name="Werner-Washburne M."/>
            <person name="Selitrennikoff C.P."/>
            <person name="Kinsey J.A."/>
            <person name="Braun E.L."/>
            <person name="Zelter A."/>
            <person name="Schulte U."/>
            <person name="Kothe G.O."/>
            <person name="Jedd G."/>
            <person name="Mewes H.-W."/>
            <person name="Staben C."/>
            <person name="Marcotte E."/>
            <person name="Greenberg D."/>
            <person name="Roy A."/>
            <person name="Foley K."/>
            <person name="Naylor J."/>
            <person name="Stange-Thomann N."/>
            <person name="Barrett R."/>
            <person name="Gnerre S."/>
            <person name="Kamal M."/>
            <person name="Kamvysselis M."/>
            <person name="Mauceli E.W."/>
            <person name="Bielke C."/>
            <person name="Rudd S."/>
            <person name="Frishman D."/>
            <person name="Krystofova S."/>
            <person name="Rasmussen C."/>
            <person name="Metzenberg R.L."/>
            <person name="Perkins D.D."/>
            <person name="Kroken S."/>
            <person name="Cogoni C."/>
            <person name="Macino G."/>
            <person name="Catcheside D.E.A."/>
            <person name="Li W."/>
            <person name="Pratt R.J."/>
            <person name="Osmani S.A."/>
            <person name="DeSouza C.P.C."/>
            <person name="Glass N.L."/>
            <person name="Orbach M.J."/>
            <person name="Berglund J.A."/>
            <person name="Voelker R."/>
            <person name="Yarden O."/>
            <person name="Plamann M."/>
            <person name="Seiler S."/>
            <person name="Dunlap J.C."/>
            <person name="Radford A."/>
            <person name="Aramayo R."/>
            <person name="Natvig D.O."/>
            <person name="Alex L.A."/>
            <person name="Mannhaupt G."/>
            <person name="Ebbole D.J."/>
            <person name="Freitag M."/>
            <person name="Paulsen I."/>
            <person name="Sachs M.S."/>
            <person name="Lander E.S."/>
            <person name="Nusbaum C."/>
            <person name="Birren B.W."/>
        </authorList>
    </citation>
    <scope>NUCLEOTIDE SEQUENCE [LARGE SCALE GENOMIC DNA]</scope>
    <source>
        <strain>ATCC 24698 / 74-OR23-1A / CBS 708.71 / DSM 1257 / FGSC 987</strain>
    </source>
</reference>
<gene>
    <name type="ORF">B12J7.040</name>
    <name type="ORF">NCU02712</name>
</gene>